<evidence type="ECO:0000250" key="1"/>
<evidence type="ECO:0000256" key="2">
    <source>
        <dbReference type="SAM" id="MobiDB-lite"/>
    </source>
</evidence>
<evidence type="ECO:0000269" key="3">
    <source>
    </source>
</evidence>
<evidence type="ECO:0000305" key="4"/>
<keyword id="KW-0963">Cytoplasm</keyword>
<keyword id="KW-0539">Nucleus</keyword>
<keyword id="KW-1185">Reference proteome</keyword>
<keyword id="KW-0690">Ribosome biogenesis</keyword>
<keyword id="KW-0698">rRNA processing</keyword>
<dbReference type="EMBL" id="CU329671">
    <property type="protein sequence ID" value="CAB52617.1"/>
    <property type="molecule type" value="Genomic_DNA"/>
</dbReference>
<dbReference type="PIR" id="T40442">
    <property type="entry name" value="T40442"/>
</dbReference>
<dbReference type="RefSeq" id="NP_595465.1">
    <property type="nucleotide sequence ID" value="NM_001021375.2"/>
</dbReference>
<dbReference type="SMR" id="Q9UUA9"/>
<dbReference type="BioGRID" id="277332">
    <property type="interactions" value="5"/>
</dbReference>
<dbReference type="FunCoup" id="Q9UUA9">
    <property type="interactions" value="459"/>
</dbReference>
<dbReference type="STRING" id="284812.Q9UUA9"/>
<dbReference type="iPTMnet" id="Q9UUA9"/>
<dbReference type="PaxDb" id="4896-SPBC409.15.1"/>
<dbReference type="EnsemblFungi" id="SPBC409.15.1">
    <property type="protein sequence ID" value="SPBC409.15.1:pep"/>
    <property type="gene ID" value="SPBC409.15"/>
</dbReference>
<dbReference type="GeneID" id="2540813"/>
<dbReference type="KEGG" id="spo:2540813"/>
<dbReference type="PomBase" id="SPBC409.15">
    <property type="gene designation" value="tsr2"/>
</dbReference>
<dbReference type="VEuPathDB" id="FungiDB:SPBC409.15"/>
<dbReference type="eggNOG" id="KOG4032">
    <property type="taxonomic scope" value="Eukaryota"/>
</dbReference>
<dbReference type="HOGENOM" id="CLU_074896_0_2_1"/>
<dbReference type="InParanoid" id="Q9UUA9"/>
<dbReference type="OMA" id="QSNWGGP"/>
<dbReference type="PhylomeDB" id="Q9UUA9"/>
<dbReference type="PRO" id="PR:Q9UUA9"/>
<dbReference type="Proteomes" id="UP000002485">
    <property type="component" value="Chromosome II"/>
</dbReference>
<dbReference type="GO" id="GO:0005829">
    <property type="term" value="C:cytosol"/>
    <property type="evidence" value="ECO:0007005"/>
    <property type="project" value="PomBase"/>
</dbReference>
<dbReference type="GO" id="GO:0005634">
    <property type="term" value="C:nucleus"/>
    <property type="evidence" value="ECO:0007005"/>
    <property type="project" value="PomBase"/>
</dbReference>
<dbReference type="GO" id="GO:0000462">
    <property type="term" value="P:maturation of SSU-rRNA from tricistronic rRNA transcript (SSU-rRNA, 5.8S rRNA, LSU-rRNA)"/>
    <property type="evidence" value="ECO:0000318"/>
    <property type="project" value="GO_Central"/>
</dbReference>
<dbReference type="InterPro" id="IPR019398">
    <property type="entry name" value="Pre-rRNA_process_TSR2"/>
</dbReference>
<dbReference type="PANTHER" id="PTHR21250">
    <property type="entry name" value="PRE-RRNA-PROCESSING PROTEIN TSR2 HOMOLOG"/>
    <property type="match status" value="1"/>
</dbReference>
<dbReference type="Pfam" id="PF10273">
    <property type="entry name" value="WGG"/>
    <property type="match status" value="1"/>
</dbReference>
<comment type="function">
    <text evidence="1">Required for 20S pre-rRNA processing.</text>
</comment>
<comment type="subcellular location">
    <subcellularLocation>
        <location evidence="3">Cytoplasm</location>
    </subcellularLocation>
    <subcellularLocation>
        <location evidence="3">Nucleus</location>
    </subcellularLocation>
</comment>
<comment type="similarity">
    <text evidence="4">Belongs to the TSR2 family.</text>
</comment>
<protein>
    <recommendedName>
        <fullName>Pre-rRNA-processing protein tsr2</fullName>
    </recommendedName>
</protein>
<name>TSR2_SCHPO</name>
<accession>Q9UUA9</accession>
<proteinExistence type="inferred from homology"/>
<feature type="chain" id="PRO_0000362996" description="Pre-rRNA-processing protein tsr2">
    <location>
        <begin position="1"/>
        <end position="179"/>
    </location>
</feature>
<feature type="region of interest" description="Disordered" evidence="2">
    <location>
        <begin position="123"/>
        <end position="179"/>
    </location>
</feature>
<feature type="compositionally biased region" description="Basic and acidic residues" evidence="2">
    <location>
        <begin position="123"/>
        <end position="134"/>
    </location>
</feature>
<feature type="compositionally biased region" description="Acidic residues" evidence="2">
    <location>
        <begin position="140"/>
        <end position="150"/>
    </location>
</feature>
<organism>
    <name type="scientific">Schizosaccharomyces pombe (strain 972 / ATCC 24843)</name>
    <name type="common">Fission yeast</name>
    <dbReference type="NCBI Taxonomy" id="284812"/>
    <lineage>
        <taxon>Eukaryota</taxon>
        <taxon>Fungi</taxon>
        <taxon>Dikarya</taxon>
        <taxon>Ascomycota</taxon>
        <taxon>Taphrinomycotina</taxon>
        <taxon>Schizosaccharomycetes</taxon>
        <taxon>Schizosaccharomycetales</taxon>
        <taxon>Schizosaccharomycetaceae</taxon>
        <taxon>Schizosaccharomyces</taxon>
    </lineage>
</organism>
<reference key="1">
    <citation type="journal article" date="2002" name="Nature">
        <title>The genome sequence of Schizosaccharomyces pombe.</title>
        <authorList>
            <person name="Wood V."/>
            <person name="Gwilliam R."/>
            <person name="Rajandream M.A."/>
            <person name="Lyne M.H."/>
            <person name="Lyne R."/>
            <person name="Stewart A."/>
            <person name="Sgouros J.G."/>
            <person name="Peat N."/>
            <person name="Hayles J."/>
            <person name="Baker S.G."/>
            <person name="Basham D."/>
            <person name="Bowman S."/>
            <person name="Brooks K."/>
            <person name="Brown D."/>
            <person name="Brown S."/>
            <person name="Chillingworth T."/>
            <person name="Churcher C.M."/>
            <person name="Collins M."/>
            <person name="Connor R."/>
            <person name="Cronin A."/>
            <person name="Davis P."/>
            <person name="Feltwell T."/>
            <person name="Fraser A."/>
            <person name="Gentles S."/>
            <person name="Goble A."/>
            <person name="Hamlin N."/>
            <person name="Harris D.E."/>
            <person name="Hidalgo J."/>
            <person name="Hodgson G."/>
            <person name="Holroyd S."/>
            <person name="Hornsby T."/>
            <person name="Howarth S."/>
            <person name="Huckle E.J."/>
            <person name="Hunt S."/>
            <person name="Jagels K."/>
            <person name="James K.D."/>
            <person name="Jones L."/>
            <person name="Jones M."/>
            <person name="Leather S."/>
            <person name="McDonald S."/>
            <person name="McLean J."/>
            <person name="Mooney P."/>
            <person name="Moule S."/>
            <person name="Mungall K.L."/>
            <person name="Murphy L.D."/>
            <person name="Niblett D."/>
            <person name="Odell C."/>
            <person name="Oliver K."/>
            <person name="O'Neil S."/>
            <person name="Pearson D."/>
            <person name="Quail M.A."/>
            <person name="Rabbinowitsch E."/>
            <person name="Rutherford K.M."/>
            <person name="Rutter S."/>
            <person name="Saunders D."/>
            <person name="Seeger K."/>
            <person name="Sharp S."/>
            <person name="Skelton J."/>
            <person name="Simmonds M.N."/>
            <person name="Squares R."/>
            <person name="Squares S."/>
            <person name="Stevens K."/>
            <person name="Taylor K."/>
            <person name="Taylor R.G."/>
            <person name="Tivey A."/>
            <person name="Walsh S.V."/>
            <person name="Warren T."/>
            <person name="Whitehead S."/>
            <person name="Woodward J.R."/>
            <person name="Volckaert G."/>
            <person name="Aert R."/>
            <person name="Robben J."/>
            <person name="Grymonprez B."/>
            <person name="Weltjens I."/>
            <person name="Vanstreels E."/>
            <person name="Rieger M."/>
            <person name="Schaefer M."/>
            <person name="Mueller-Auer S."/>
            <person name="Gabel C."/>
            <person name="Fuchs M."/>
            <person name="Duesterhoeft A."/>
            <person name="Fritzc C."/>
            <person name="Holzer E."/>
            <person name="Moestl D."/>
            <person name="Hilbert H."/>
            <person name="Borzym K."/>
            <person name="Langer I."/>
            <person name="Beck A."/>
            <person name="Lehrach H."/>
            <person name="Reinhardt R."/>
            <person name="Pohl T.M."/>
            <person name="Eger P."/>
            <person name="Zimmermann W."/>
            <person name="Wedler H."/>
            <person name="Wambutt R."/>
            <person name="Purnelle B."/>
            <person name="Goffeau A."/>
            <person name="Cadieu E."/>
            <person name="Dreano S."/>
            <person name="Gloux S."/>
            <person name="Lelaure V."/>
            <person name="Mottier S."/>
            <person name="Galibert F."/>
            <person name="Aves S.J."/>
            <person name="Xiang Z."/>
            <person name="Hunt C."/>
            <person name="Moore K."/>
            <person name="Hurst S.M."/>
            <person name="Lucas M."/>
            <person name="Rochet M."/>
            <person name="Gaillardin C."/>
            <person name="Tallada V.A."/>
            <person name="Garzon A."/>
            <person name="Thode G."/>
            <person name="Daga R.R."/>
            <person name="Cruzado L."/>
            <person name="Jimenez J."/>
            <person name="Sanchez M."/>
            <person name="del Rey F."/>
            <person name="Benito J."/>
            <person name="Dominguez A."/>
            <person name="Revuelta J.L."/>
            <person name="Moreno S."/>
            <person name="Armstrong J."/>
            <person name="Forsburg S.L."/>
            <person name="Cerutti L."/>
            <person name="Lowe T."/>
            <person name="McCombie W.R."/>
            <person name="Paulsen I."/>
            <person name="Potashkin J."/>
            <person name="Shpakovski G.V."/>
            <person name="Ussery D."/>
            <person name="Barrell B.G."/>
            <person name="Nurse P."/>
        </authorList>
    </citation>
    <scope>NUCLEOTIDE SEQUENCE [LARGE SCALE GENOMIC DNA]</scope>
    <source>
        <strain>972 / ATCC 24843</strain>
    </source>
</reference>
<reference key="2">
    <citation type="journal article" date="2006" name="Nat. Biotechnol.">
        <title>ORFeome cloning and global analysis of protein localization in the fission yeast Schizosaccharomyces pombe.</title>
        <authorList>
            <person name="Matsuyama A."/>
            <person name="Arai R."/>
            <person name="Yashiroda Y."/>
            <person name="Shirai A."/>
            <person name="Kamata A."/>
            <person name="Sekido S."/>
            <person name="Kobayashi Y."/>
            <person name="Hashimoto A."/>
            <person name="Hamamoto M."/>
            <person name="Hiraoka Y."/>
            <person name="Horinouchi S."/>
            <person name="Yoshida M."/>
        </authorList>
    </citation>
    <scope>SUBCELLULAR LOCATION [LARGE SCALE ANALYSIS]</scope>
</reference>
<gene>
    <name type="primary">tsr2</name>
    <name type="ORF">SPBC409.15</name>
</gene>
<sequence length="179" mass="20509">MFDDPSKRLTYFEYAVGVLLCSWPVMKQAVEEEWADVDTADKRDWMAGVLVDYITVTSDVEAWDVEELILQVLQDEFNVGSIEDDSPYILAQDLVNVWKAACEDNYEPIREIHERLGKQLLEKEEGKEKTREESNPPVLVEDETIVDAEDGGAAQNQQEKQQGPIVDDDGFTVVQKRRR</sequence>